<name>CNR2_MOUSE</name>
<gene>
    <name type="primary">Cnr2</name>
</gene>
<proteinExistence type="evidence at protein level"/>
<reference key="1">
    <citation type="journal article" date="1996" name="Biochim. Biophys. Acta">
        <title>Molecular cloning, expression and function of the murine CB2 peripheral cannabinoid receptor.</title>
        <authorList>
            <person name="Shire D."/>
            <person name="Calandra B."/>
            <person name="Rinaldi-Carmona M."/>
            <person name="Oustric D."/>
            <person name="Pessegue B."/>
            <person name="Cabanne O."/>
            <person name="le Fur G."/>
            <person name="Caput D."/>
            <person name="Ferrara P."/>
        </authorList>
    </citation>
    <scope>NUCLEOTIDE SEQUENCE [MRNA]</scope>
    <scope>FUNCTION</scope>
    <source>
        <strain>C57BL/6J</strain>
        <tissue>Spleen</tissue>
    </source>
</reference>
<reference key="2">
    <citation type="journal article" date="1997" name="J. Virol.">
        <title>The genes encoding the peripheral cannabinoid receptor and alpha-L-fucosidase are located near a newly identified common virus integration site, Evi11.</title>
        <authorList>
            <person name="Valk P.J.M."/>
            <person name="Hol S."/>
            <person name="Vankan Y."/>
            <person name="Ihle J.N."/>
            <person name="Askew D."/>
            <person name="Jenkins N.A."/>
            <person name="Gilbert D.J."/>
            <person name="Copeland N.G."/>
            <person name="de Both N.J."/>
            <person name="Loewenberg B."/>
            <person name="Delwel R."/>
        </authorList>
    </citation>
    <scope>NUCLEOTIDE SEQUENCE [MRNA]</scope>
    <source>
        <strain>NFS/N</strain>
    </source>
</reference>
<reference key="3">
    <citation type="submission" date="1995-02" db="EMBL/GenBank/DDBJ databases">
        <authorList>
            <person name="Buckley N.E."/>
            <person name="Bonner T.I."/>
        </authorList>
    </citation>
    <scope>NUCLEOTIDE SEQUENCE [GENOMIC DNA]</scope>
    <source>
        <strain>129/Sv</strain>
    </source>
</reference>
<reference key="4">
    <citation type="journal article" date="2005" name="Science">
        <title>The transcriptional landscape of the mammalian genome.</title>
        <authorList>
            <person name="Carninci P."/>
            <person name="Kasukawa T."/>
            <person name="Katayama S."/>
            <person name="Gough J."/>
            <person name="Frith M.C."/>
            <person name="Maeda N."/>
            <person name="Oyama R."/>
            <person name="Ravasi T."/>
            <person name="Lenhard B."/>
            <person name="Wells C."/>
            <person name="Kodzius R."/>
            <person name="Shimokawa K."/>
            <person name="Bajic V.B."/>
            <person name="Brenner S.E."/>
            <person name="Batalov S."/>
            <person name="Forrest A.R."/>
            <person name="Zavolan M."/>
            <person name="Davis M.J."/>
            <person name="Wilming L.G."/>
            <person name="Aidinis V."/>
            <person name="Allen J.E."/>
            <person name="Ambesi-Impiombato A."/>
            <person name="Apweiler R."/>
            <person name="Aturaliya R.N."/>
            <person name="Bailey T.L."/>
            <person name="Bansal M."/>
            <person name="Baxter L."/>
            <person name="Beisel K.W."/>
            <person name="Bersano T."/>
            <person name="Bono H."/>
            <person name="Chalk A.M."/>
            <person name="Chiu K.P."/>
            <person name="Choudhary V."/>
            <person name="Christoffels A."/>
            <person name="Clutterbuck D.R."/>
            <person name="Crowe M.L."/>
            <person name="Dalla E."/>
            <person name="Dalrymple B.P."/>
            <person name="de Bono B."/>
            <person name="Della Gatta G."/>
            <person name="di Bernardo D."/>
            <person name="Down T."/>
            <person name="Engstrom P."/>
            <person name="Fagiolini M."/>
            <person name="Faulkner G."/>
            <person name="Fletcher C.F."/>
            <person name="Fukushima T."/>
            <person name="Furuno M."/>
            <person name="Futaki S."/>
            <person name="Gariboldi M."/>
            <person name="Georgii-Hemming P."/>
            <person name="Gingeras T.R."/>
            <person name="Gojobori T."/>
            <person name="Green R.E."/>
            <person name="Gustincich S."/>
            <person name="Harbers M."/>
            <person name="Hayashi Y."/>
            <person name="Hensch T.K."/>
            <person name="Hirokawa N."/>
            <person name="Hill D."/>
            <person name="Huminiecki L."/>
            <person name="Iacono M."/>
            <person name="Ikeo K."/>
            <person name="Iwama A."/>
            <person name="Ishikawa T."/>
            <person name="Jakt M."/>
            <person name="Kanapin A."/>
            <person name="Katoh M."/>
            <person name="Kawasawa Y."/>
            <person name="Kelso J."/>
            <person name="Kitamura H."/>
            <person name="Kitano H."/>
            <person name="Kollias G."/>
            <person name="Krishnan S.P."/>
            <person name="Kruger A."/>
            <person name="Kummerfeld S.K."/>
            <person name="Kurochkin I.V."/>
            <person name="Lareau L.F."/>
            <person name="Lazarevic D."/>
            <person name="Lipovich L."/>
            <person name="Liu J."/>
            <person name="Liuni S."/>
            <person name="McWilliam S."/>
            <person name="Madan Babu M."/>
            <person name="Madera M."/>
            <person name="Marchionni L."/>
            <person name="Matsuda H."/>
            <person name="Matsuzawa S."/>
            <person name="Miki H."/>
            <person name="Mignone F."/>
            <person name="Miyake S."/>
            <person name="Morris K."/>
            <person name="Mottagui-Tabar S."/>
            <person name="Mulder N."/>
            <person name="Nakano N."/>
            <person name="Nakauchi H."/>
            <person name="Ng P."/>
            <person name="Nilsson R."/>
            <person name="Nishiguchi S."/>
            <person name="Nishikawa S."/>
            <person name="Nori F."/>
            <person name="Ohara O."/>
            <person name="Okazaki Y."/>
            <person name="Orlando V."/>
            <person name="Pang K.C."/>
            <person name="Pavan W.J."/>
            <person name="Pavesi G."/>
            <person name="Pesole G."/>
            <person name="Petrovsky N."/>
            <person name="Piazza S."/>
            <person name="Reed J."/>
            <person name="Reid J.F."/>
            <person name="Ring B.Z."/>
            <person name="Ringwald M."/>
            <person name="Rost B."/>
            <person name="Ruan Y."/>
            <person name="Salzberg S.L."/>
            <person name="Sandelin A."/>
            <person name="Schneider C."/>
            <person name="Schoenbach C."/>
            <person name="Sekiguchi K."/>
            <person name="Semple C.A."/>
            <person name="Seno S."/>
            <person name="Sessa L."/>
            <person name="Sheng Y."/>
            <person name="Shibata Y."/>
            <person name="Shimada H."/>
            <person name="Shimada K."/>
            <person name="Silva D."/>
            <person name="Sinclair B."/>
            <person name="Sperling S."/>
            <person name="Stupka E."/>
            <person name="Sugiura K."/>
            <person name="Sultana R."/>
            <person name="Takenaka Y."/>
            <person name="Taki K."/>
            <person name="Tammoja K."/>
            <person name="Tan S.L."/>
            <person name="Tang S."/>
            <person name="Taylor M.S."/>
            <person name="Tegner J."/>
            <person name="Teichmann S.A."/>
            <person name="Ueda H.R."/>
            <person name="van Nimwegen E."/>
            <person name="Verardo R."/>
            <person name="Wei C.L."/>
            <person name="Yagi K."/>
            <person name="Yamanishi H."/>
            <person name="Zabarovsky E."/>
            <person name="Zhu S."/>
            <person name="Zimmer A."/>
            <person name="Hide W."/>
            <person name="Bult C."/>
            <person name="Grimmond S.M."/>
            <person name="Teasdale R.D."/>
            <person name="Liu E.T."/>
            <person name="Brusic V."/>
            <person name="Quackenbush J."/>
            <person name="Wahlestedt C."/>
            <person name="Mattick J.S."/>
            <person name="Hume D.A."/>
            <person name="Kai C."/>
            <person name="Sasaki D."/>
            <person name="Tomaru Y."/>
            <person name="Fukuda S."/>
            <person name="Kanamori-Katayama M."/>
            <person name="Suzuki M."/>
            <person name="Aoki J."/>
            <person name="Arakawa T."/>
            <person name="Iida J."/>
            <person name="Imamura K."/>
            <person name="Itoh M."/>
            <person name="Kato T."/>
            <person name="Kawaji H."/>
            <person name="Kawagashira N."/>
            <person name="Kawashima T."/>
            <person name="Kojima M."/>
            <person name="Kondo S."/>
            <person name="Konno H."/>
            <person name="Nakano K."/>
            <person name="Ninomiya N."/>
            <person name="Nishio T."/>
            <person name="Okada M."/>
            <person name="Plessy C."/>
            <person name="Shibata K."/>
            <person name="Shiraki T."/>
            <person name="Suzuki S."/>
            <person name="Tagami M."/>
            <person name="Waki K."/>
            <person name="Watahiki A."/>
            <person name="Okamura-Oho Y."/>
            <person name="Suzuki H."/>
            <person name="Kawai J."/>
            <person name="Hayashizaki Y."/>
        </authorList>
    </citation>
    <scope>NUCLEOTIDE SEQUENCE [LARGE SCALE MRNA]</scope>
    <source>
        <strain>C57BL/6J</strain>
        <tissue>Bone</tissue>
        <tissue>Thymus</tissue>
    </source>
</reference>
<reference key="5">
    <citation type="journal article" date="2009" name="PLoS Biol.">
        <title>Lineage-specific biology revealed by a finished genome assembly of the mouse.</title>
        <authorList>
            <person name="Church D.M."/>
            <person name="Goodstadt L."/>
            <person name="Hillier L.W."/>
            <person name="Zody M.C."/>
            <person name="Goldstein S."/>
            <person name="She X."/>
            <person name="Bult C.J."/>
            <person name="Agarwala R."/>
            <person name="Cherry J.L."/>
            <person name="DiCuccio M."/>
            <person name="Hlavina W."/>
            <person name="Kapustin Y."/>
            <person name="Meric P."/>
            <person name="Maglott D."/>
            <person name="Birtle Z."/>
            <person name="Marques A.C."/>
            <person name="Graves T."/>
            <person name="Zhou S."/>
            <person name="Teague B."/>
            <person name="Potamousis K."/>
            <person name="Churas C."/>
            <person name="Place M."/>
            <person name="Herschleb J."/>
            <person name="Runnheim R."/>
            <person name="Forrest D."/>
            <person name="Amos-Landgraf J."/>
            <person name="Schwartz D.C."/>
            <person name="Cheng Z."/>
            <person name="Lindblad-Toh K."/>
            <person name="Eichler E.E."/>
            <person name="Ponting C.P."/>
        </authorList>
    </citation>
    <scope>NUCLEOTIDE SEQUENCE [LARGE SCALE GENOMIC DNA]</scope>
    <source>
        <strain>C57BL/6J</strain>
    </source>
</reference>
<reference key="6">
    <citation type="submission" date="2005-09" db="EMBL/GenBank/DDBJ databases">
        <authorList>
            <person name="Mural R.J."/>
            <person name="Adams M.D."/>
            <person name="Myers E.W."/>
            <person name="Smith H.O."/>
            <person name="Venter J.C."/>
        </authorList>
    </citation>
    <scope>NUCLEOTIDE SEQUENCE [LARGE SCALE GENOMIC DNA]</scope>
</reference>
<reference key="7">
    <citation type="journal article" date="2004" name="Genome Res.">
        <title>The status, quality, and expansion of the NIH full-length cDNA project: the Mammalian Gene Collection (MGC).</title>
        <authorList>
            <consortium name="The MGC Project Team"/>
        </authorList>
    </citation>
    <scope>NUCLEOTIDE SEQUENCE [LARGE SCALE MRNA]</scope>
    <source>
        <strain>FVB/N</strain>
        <tissue>Liver</tissue>
    </source>
</reference>
<reference key="8">
    <citation type="journal article" date="2000" name="Eur. J. Pharmacol.">
        <title>Immunomodulation by cannabinoids is absent in mice deficient for the cannabinoid CB(2) receptor.</title>
        <authorList>
            <person name="Buckley N.E."/>
            <person name="McCoy K.L."/>
            <person name="Mezey E."/>
            <person name="Bonner T."/>
            <person name="Zimmer A."/>
            <person name="Felder C.C."/>
            <person name="Glass M."/>
            <person name="Zimmer A."/>
        </authorList>
    </citation>
    <scope>DISRUPTION PHENOTYPE</scope>
    <scope>FUNCTION</scope>
</reference>
<reference key="9">
    <citation type="journal article" date="2002" name="Blood">
        <title>Hematopoietic cells expressing the peripheral cannabinoid receptor migrate in response to the endocannabinoid 2-arachidonoylglycerol.</title>
        <authorList>
            <person name="Jorda M.A."/>
            <person name="Verbakel S.E."/>
            <person name="Valk P.J.M."/>
            <person name="Vankan-Berkhoudt Y.V."/>
            <person name="Maccarrone M."/>
            <person name="Finazzi-Agro A."/>
            <person name="Loewenberg B."/>
            <person name="Delwel R."/>
        </authorList>
    </citation>
    <scope>FUNCTION</scope>
    <scope>TISSUE SPECIFICITY</scope>
</reference>
<reference key="10">
    <citation type="journal article" date="2003" name="J. Clin. Invest.">
        <title>Inhibition of skin tumor growth and angiogenesis in vivo by activation of cannabinoid receptors.</title>
        <authorList>
            <person name="Casanova M.L."/>
            <person name="Blazquez C."/>
            <person name="Martinez-Palacio J."/>
            <person name="Villanueva C."/>
            <person name="Fernandez-Acenero M.J."/>
            <person name="Huffman J.W."/>
            <person name="Jorcano J.L."/>
            <person name="Guzman M."/>
        </authorList>
    </citation>
    <scope>TISSUE SPECIFICITY</scope>
</reference>
<reference key="11">
    <citation type="journal article" date="2006" name="Immunogenetics">
        <title>Formation of B and T cell subsets require the cannabinoid receptor CB2.</title>
        <authorList>
            <person name="Ziring D."/>
            <person name="Wei B."/>
            <person name="Velazquez P."/>
            <person name="Schrage M."/>
            <person name="Buckley N.E."/>
            <person name="Braun J."/>
        </authorList>
    </citation>
    <scope>FUNCTION</scope>
    <scope>TISSUE SPECIFICITY</scope>
</reference>
<reference key="12">
    <citation type="journal article" date="2006" name="Pain">
        <title>CB2 cannabinoid receptor mediation of antinociception.</title>
        <authorList>
            <person name="Ibrahim M.M."/>
            <person name="Rude M.L."/>
            <person name="Stagg N.J."/>
            <person name="Mata H.P."/>
            <person name="Lai J."/>
            <person name="Vanderah T.W."/>
            <person name="Porreca F."/>
            <person name="Buckley N.E."/>
            <person name="Makriyannis A."/>
            <person name="Malan T.P. Jr."/>
        </authorList>
    </citation>
    <scope>FUNCTION</scope>
</reference>
<reference key="13">
    <citation type="journal article" date="2006" name="Proc. Natl. Acad. Sci. U.S.A.">
        <title>Peripheral cannabinoid receptor, CB2, regulates bone mass.</title>
        <authorList>
            <person name="Ofek O."/>
            <person name="Karsak M."/>
            <person name="Leclerc N."/>
            <person name="Fogel M."/>
            <person name="Frenkel B."/>
            <person name="Wright K."/>
            <person name="Tam J."/>
            <person name="Attar-Namdar M."/>
            <person name="Kram V."/>
            <person name="Shohami E."/>
            <person name="Mechoulam R."/>
            <person name="Zimmer A."/>
            <person name="Bab I."/>
        </authorList>
    </citation>
    <scope>FUNCTION</scope>
    <scope>TISSUE SPECIFICITY</scope>
</reference>
<reference key="14">
    <citation type="journal article" date="2007" name="Nat. Med.">
        <title>Direct suppression of CNS autoimmune inflammation via the cannabinoid receptor CB1 on neurons and CB2 on autoreactive T cells.</title>
        <authorList>
            <person name="Maresz K."/>
            <person name="Pryce G."/>
            <person name="Ponomarev E.D."/>
            <person name="Marsicano G."/>
            <person name="Croxford J.L."/>
            <person name="Shriver L.P."/>
            <person name="Ledent C."/>
            <person name="Cheng X."/>
            <person name="Carrier E.J."/>
            <person name="Mann M.K."/>
            <person name="Giovannoni G."/>
            <person name="Pertwee R.G."/>
            <person name="Yamamura T."/>
            <person name="Buckley N.E."/>
            <person name="Hillard C.J."/>
            <person name="Lutz B."/>
            <person name="Baker D."/>
            <person name="Dittel B.N."/>
        </authorList>
    </citation>
    <scope>FUNCTION</scope>
</reference>
<reference key="15">
    <citation type="journal article" date="2008" name="PLoS ONE">
        <title>Brain neuronal CB2 cannabinoid receptors in drug abuse and depression: from mice to human subjects.</title>
        <authorList>
            <person name="Onaivi E.S."/>
            <person name="Ishiguro H."/>
            <person name="Gong J.-P."/>
            <person name="Patel S."/>
            <person name="Meozzi P.A."/>
            <person name="Myers L."/>
            <person name="Perchuk A."/>
            <person name="Mora Z."/>
            <person name="Tagliaferro P.A."/>
            <person name="Gardner E."/>
            <person name="Brusco A."/>
            <person name="Akinshola B.E."/>
            <person name="Hope B."/>
            <person name="Lujilde J."/>
            <person name="Inada T."/>
            <person name="Iwasaki S."/>
            <person name="Macharia D."/>
            <person name="Teasenfitz L."/>
            <person name="Arinami T."/>
            <person name="Uhl G.R."/>
        </authorList>
    </citation>
    <scope>FUNCTION</scope>
    <scope>TISSUE SPECIFICITY</scope>
</reference>
<reference key="16">
    <citation type="journal article" date="2009" name="Immunity">
        <title>The phagosomal proteome in interferon-gamma-activated macrophages.</title>
        <authorList>
            <person name="Trost M."/>
            <person name="English L."/>
            <person name="Lemieux S."/>
            <person name="Courcelles M."/>
            <person name="Desjardins M."/>
            <person name="Thibault P."/>
        </authorList>
    </citation>
    <scope>PHOSPHORYLATION [LARGE SCALE ANALYSIS] AT SER-335; SER-336 AND THR-338</scope>
    <scope>IDENTIFICATION BY MASS SPECTROMETRY [LARGE SCALE ANALYSIS]</scope>
</reference>
<reference key="17">
    <citation type="journal article" date="2010" name="Cell">
        <title>A tissue-specific atlas of mouse protein phosphorylation and expression.</title>
        <authorList>
            <person name="Huttlin E.L."/>
            <person name="Jedrychowski M.P."/>
            <person name="Elias J.E."/>
            <person name="Goswami T."/>
            <person name="Rad R."/>
            <person name="Beausoleil S.A."/>
            <person name="Villen J."/>
            <person name="Haas W."/>
            <person name="Sowa M.E."/>
            <person name="Gygi S.P."/>
        </authorList>
    </citation>
    <scope>PHOSPHORYLATION [LARGE SCALE ANALYSIS] AT THR-338</scope>
    <scope>IDENTIFICATION BY MASS SPECTROMETRY [LARGE SCALE ANALYSIS]</scope>
    <source>
        <tissue>Spleen</tissue>
    </source>
</reference>
<organism>
    <name type="scientific">Mus musculus</name>
    <name type="common">Mouse</name>
    <dbReference type="NCBI Taxonomy" id="10090"/>
    <lineage>
        <taxon>Eukaryota</taxon>
        <taxon>Metazoa</taxon>
        <taxon>Chordata</taxon>
        <taxon>Craniata</taxon>
        <taxon>Vertebrata</taxon>
        <taxon>Euteleostomi</taxon>
        <taxon>Mammalia</taxon>
        <taxon>Eutheria</taxon>
        <taxon>Euarchontoglires</taxon>
        <taxon>Glires</taxon>
        <taxon>Rodentia</taxon>
        <taxon>Myomorpha</taxon>
        <taxon>Muroidea</taxon>
        <taxon>Muridae</taxon>
        <taxon>Murinae</taxon>
        <taxon>Mus</taxon>
        <taxon>Mus</taxon>
    </lineage>
</organism>
<keyword id="KW-1003">Cell membrane</keyword>
<keyword id="KW-0966">Cell projection</keyword>
<keyword id="KW-0297">G-protein coupled receptor</keyword>
<keyword id="KW-0325">Glycoprotein</keyword>
<keyword id="KW-0395">Inflammatory response</keyword>
<keyword id="KW-0472">Membrane</keyword>
<keyword id="KW-0597">Phosphoprotein</keyword>
<keyword id="KW-0675">Receptor</keyword>
<keyword id="KW-1185">Reference proteome</keyword>
<keyword id="KW-0807">Transducer</keyword>
<keyword id="KW-0812">Transmembrane</keyword>
<keyword id="KW-1133">Transmembrane helix</keyword>
<comment type="function">
    <text evidence="5 6 8 9 10 11 12 13">Heterotrimeric G protein-coupled receptor for endocannabinoid 2-arachidonoylglycerol mediating inhibition of adenylate cyclase. May function in inflammatory response, nociceptive transmission and bone homeostasis.</text>
</comment>
<comment type="subcellular location">
    <subcellularLocation>
        <location evidence="1">Cell membrane</location>
        <topology evidence="1">Multi-pass membrane protein</topology>
    </subcellularLocation>
    <subcellularLocation>
        <location evidence="1">Cell projection</location>
        <location evidence="1">Dendrite</location>
    </subcellularLocation>
    <subcellularLocation>
        <location evidence="1">Perikaryon</location>
    </subcellularLocation>
    <text evidence="1">Localizes to apical dendrite of pyramidal neurons.</text>
</comment>
<comment type="tissue specificity">
    <text evidence="6 7 8 10 12">Expressed by cells of hematopoietic origin. Expressed in skin in suprabasal layers and hair follicles, in brain by neurons and glial cells and by osteoblasts, osteocytes, osteoclasts (at protein level).</text>
</comment>
<comment type="disruption phenotype">
    <text evidence="5">Mutant mice are responsive to the psychotropic effects of cannabinoid but not to the cannabinoid-induced immunomodulation. They also show accelerated age-related trabecular bone loss and cortical expansion.</text>
</comment>
<comment type="similarity">
    <text evidence="3">Belongs to the G-protein coupled receptor 1 family.</text>
</comment>
<feature type="chain" id="PRO_0000069324" description="Cannabinoid receptor 2">
    <location>
        <begin position="1"/>
        <end position="347"/>
    </location>
</feature>
<feature type="topological domain" description="Extracellular" evidence="2">
    <location>
        <begin position="1"/>
        <end position="33"/>
    </location>
</feature>
<feature type="transmembrane region" description="Helical; Name=1" evidence="2">
    <location>
        <begin position="34"/>
        <end position="59"/>
    </location>
</feature>
<feature type="topological domain" description="Cytoplasmic" evidence="2">
    <location>
        <begin position="60"/>
        <end position="71"/>
    </location>
</feature>
<feature type="transmembrane region" description="Helical; Name=2" evidence="2">
    <location>
        <begin position="72"/>
        <end position="92"/>
    </location>
</feature>
<feature type="topological domain" description="Extracellular" evidence="2">
    <location>
        <begin position="93"/>
        <end position="104"/>
    </location>
</feature>
<feature type="transmembrane region" description="Helical; Name=3" evidence="2">
    <location>
        <begin position="105"/>
        <end position="129"/>
    </location>
</feature>
<feature type="topological domain" description="Cytoplasmic" evidence="2">
    <location>
        <begin position="130"/>
        <end position="149"/>
    </location>
</feature>
<feature type="transmembrane region" description="Helical; Name=4" evidence="2">
    <location>
        <begin position="150"/>
        <end position="172"/>
    </location>
</feature>
<feature type="topological domain" description="Extracellular" evidence="2">
    <location>
        <begin position="173"/>
        <end position="188"/>
    </location>
</feature>
<feature type="transmembrane region" description="Helical; Name=5" evidence="2">
    <location>
        <begin position="189"/>
        <end position="214"/>
    </location>
</feature>
<feature type="topological domain" description="Cytoplasmic" evidence="2">
    <location>
        <begin position="215"/>
        <end position="246"/>
    </location>
</feature>
<feature type="transmembrane region" description="Helical; Name=6" evidence="2">
    <location>
        <begin position="247"/>
        <end position="267"/>
    </location>
</feature>
<feature type="topological domain" description="Extracellular" evidence="2">
    <location>
        <begin position="268"/>
        <end position="279"/>
    </location>
</feature>
<feature type="transmembrane region" description="Helical; Name=7" evidence="2">
    <location>
        <begin position="280"/>
        <end position="301"/>
    </location>
</feature>
<feature type="topological domain" description="Cytoplasmic" evidence="2">
    <location>
        <begin position="302"/>
        <end position="347"/>
    </location>
</feature>
<feature type="region of interest" description="Disordered" evidence="4">
    <location>
        <begin position="326"/>
        <end position="347"/>
    </location>
</feature>
<feature type="modified residue" description="Phosphoserine" evidence="15">
    <location>
        <position position="335"/>
    </location>
</feature>
<feature type="modified residue" description="Phosphoserine" evidence="15">
    <location>
        <position position="336"/>
    </location>
</feature>
<feature type="modified residue" description="Phosphothreonine" evidence="15 16">
    <location>
        <position position="338"/>
    </location>
</feature>
<feature type="glycosylation site" description="N-linked (GlcNAc...) asparagine" evidence="2">
    <location>
        <position position="11"/>
    </location>
</feature>
<feature type="sequence conflict" description="In Ref. 2; CAA63655." evidence="14" ref="2">
    <original>L</original>
    <variation>V</variation>
    <location>
        <position position="64"/>
    </location>
</feature>
<feature type="sequence conflict" description="In Ref. 2; CAA63655." evidence="14" ref="2">
    <original>L</original>
    <variation>V</variation>
    <location>
        <position position="126"/>
    </location>
</feature>
<feature type="sequence conflict" description="In Ref. 3; AAA63757." evidence="14" ref="3">
    <original>T</original>
    <variation>M</variation>
    <location>
        <position position="272"/>
    </location>
</feature>
<feature type="sequence conflict" description="In Ref. 3; AAA63757." evidence="14" ref="3">
    <original>G</original>
    <variation>A</variation>
    <location>
        <position position="332"/>
    </location>
</feature>
<protein>
    <recommendedName>
        <fullName>Cannabinoid receptor 2</fullName>
        <shortName>CB-2</shortName>
        <shortName>CB2</shortName>
        <shortName>mCB2</shortName>
    </recommendedName>
</protein>
<sequence length="347" mass="38213">MEGCRETEVTNGSNGGLEFNPMKEYMILSSGQQIAVAVLCTLMGLLSALENMAVLYIILSSRRLRRKPSYLFISSLAGADFLASVIFACNFVIFHVFHGVDSNAIFLLKIGSVTMTFTASVGSLLLTAVDRYLCLCYPPTYKALVTRGRALVALCVMWVLSALISYLPLMGWTCCPSPCSELFPLIPNDYLLGWLLFIAILFSGIIYTYGYVLWKAHRHVATLAEHQDRQVPGIARMRLDVRLAKTLGLVLAVLLICWFPALALMGHSLVTTLSDQVKEAFAFCSMLCLVNSMVNPIIYALRSGEIRSAAQHCLIGWKKYLQGLGPEGKEEGPRSSVTETEADVKTT</sequence>
<evidence type="ECO:0000250" key="1"/>
<evidence type="ECO:0000255" key="2"/>
<evidence type="ECO:0000255" key="3">
    <source>
        <dbReference type="PROSITE-ProRule" id="PRU00521"/>
    </source>
</evidence>
<evidence type="ECO:0000256" key="4">
    <source>
        <dbReference type="SAM" id="MobiDB-lite"/>
    </source>
</evidence>
<evidence type="ECO:0000269" key="5">
    <source>
    </source>
</evidence>
<evidence type="ECO:0000269" key="6">
    <source>
    </source>
</evidence>
<evidence type="ECO:0000269" key="7">
    <source>
    </source>
</evidence>
<evidence type="ECO:0000269" key="8">
    <source>
    </source>
</evidence>
<evidence type="ECO:0000269" key="9">
    <source>
    </source>
</evidence>
<evidence type="ECO:0000269" key="10">
    <source>
    </source>
</evidence>
<evidence type="ECO:0000269" key="11">
    <source>
    </source>
</evidence>
<evidence type="ECO:0000269" key="12">
    <source>
    </source>
</evidence>
<evidence type="ECO:0000269" key="13">
    <source>
    </source>
</evidence>
<evidence type="ECO:0000305" key="14"/>
<evidence type="ECO:0007744" key="15">
    <source>
    </source>
</evidence>
<evidence type="ECO:0007744" key="16">
    <source>
    </source>
</evidence>
<accession>P47936</accession>
<accession>Q544H5</accession>
<dbReference type="EMBL" id="X86405">
    <property type="protein sequence ID" value="CAA60159.1"/>
    <property type="molecule type" value="mRNA"/>
</dbReference>
<dbReference type="EMBL" id="X93168">
    <property type="protein sequence ID" value="CAA63655.1"/>
    <property type="molecule type" value="mRNA"/>
</dbReference>
<dbReference type="EMBL" id="U21681">
    <property type="protein sequence ID" value="AAA63757.1"/>
    <property type="molecule type" value="Genomic_DNA"/>
</dbReference>
<dbReference type="EMBL" id="AK036658">
    <property type="protein sequence ID" value="BAC29520.1"/>
    <property type="molecule type" value="mRNA"/>
</dbReference>
<dbReference type="EMBL" id="AK037898">
    <property type="protein sequence ID" value="BAC29894.1"/>
    <property type="molecule type" value="mRNA"/>
</dbReference>
<dbReference type="EMBL" id="AK134109">
    <property type="protein sequence ID" value="BAE22017.1"/>
    <property type="molecule type" value="mRNA"/>
</dbReference>
<dbReference type="EMBL" id="AL672076">
    <property type="status" value="NOT_ANNOTATED_CDS"/>
    <property type="molecule type" value="Genomic_DNA"/>
</dbReference>
<dbReference type="EMBL" id="CH466552">
    <property type="protein sequence ID" value="EDL29965.1"/>
    <property type="molecule type" value="Genomic_DNA"/>
</dbReference>
<dbReference type="EMBL" id="BC024052">
    <property type="protein sequence ID" value="AAH24052.1"/>
    <property type="molecule type" value="mRNA"/>
</dbReference>
<dbReference type="CCDS" id="CCDS18793.1"/>
<dbReference type="PIR" id="S70364">
    <property type="entry name" value="S70364"/>
</dbReference>
<dbReference type="RefSeq" id="NP_001292207.1">
    <property type="nucleotide sequence ID" value="NM_001305278.2"/>
</dbReference>
<dbReference type="RefSeq" id="NP_034054.3">
    <property type="nucleotide sequence ID" value="NM_009924.4"/>
</dbReference>
<dbReference type="SMR" id="P47936"/>
<dbReference type="BioGRID" id="198794">
    <property type="interactions" value="1"/>
</dbReference>
<dbReference type="CORUM" id="P47936"/>
<dbReference type="FunCoup" id="P47936">
    <property type="interactions" value="439"/>
</dbReference>
<dbReference type="IntAct" id="P47936">
    <property type="interactions" value="3"/>
</dbReference>
<dbReference type="STRING" id="10090.ENSMUSP00000095454"/>
<dbReference type="BindingDB" id="P47936"/>
<dbReference type="ChEMBL" id="CHEMBL5373"/>
<dbReference type="DrugCentral" id="P47936"/>
<dbReference type="GuidetoPHARMACOLOGY" id="57"/>
<dbReference type="GlyCosmos" id="P47936">
    <property type="glycosylation" value="1 site, No reported glycans"/>
</dbReference>
<dbReference type="GlyGen" id="P47936">
    <property type="glycosylation" value="1 site"/>
</dbReference>
<dbReference type="iPTMnet" id="P47936"/>
<dbReference type="PhosphoSitePlus" id="P47936"/>
<dbReference type="PaxDb" id="10090-ENSMUSP00000095454"/>
<dbReference type="ProteomicsDB" id="283658"/>
<dbReference type="Antibodypedia" id="4047">
    <property type="antibodies" value="503 antibodies from 41 providers"/>
</dbReference>
<dbReference type="DNASU" id="12802"/>
<dbReference type="Ensembl" id="ENSMUST00000068830.4">
    <property type="protein sequence ID" value="ENSMUSP00000069957.4"/>
    <property type="gene ID" value="ENSMUSG00000062585.12"/>
</dbReference>
<dbReference type="Ensembl" id="ENSMUST00000097843.9">
    <property type="protein sequence ID" value="ENSMUSP00000095454.3"/>
    <property type="gene ID" value="ENSMUSG00000062585.12"/>
</dbReference>
<dbReference type="GeneID" id="12802"/>
<dbReference type="KEGG" id="mmu:12802"/>
<dbReference type="UCSC" id="uc008vhh.3">
    <property type="organism name" value="mouse"/>
</dbReference>
<dbReference type="AGR" id="MGI:104650"/>
<dbReference type="CTD" id="1269"/>
<dbReference type="MGI" id="MGI:104650">
    <property type="gene designation" value="Cnr2"/>
</dbReference>
<dbReference type="VEuPathDB" id="HostDB:ENSMUSG00000062585"/>
<dbReference type="eggNOG" id="KOG3656">
    <property type="taxonomic scope" value="Eukaryota"/>
</dbReference>
<dbReference type="GeneTree" id="ENSGT01120000271819"/>
<dbReference type="HOGENOM" id="CLU_009579_7_0_1"/>
<dbReference type="InParanoid" id="P47936"/>
<dbReference type="OMA" id="AFDRYIC"/>
<dbReference type="OrthoDB" id="5966748at2759"/>
<dbReference type="PhylomeDB" id="P47936"/>
<dbReference type="TreeFam" id="TF330052"/>
<dbReference type="Reactome" id="R-MMU-373076">
    <property type="pathway name" value="Class A/1 (Rhodopsin-like receptors)"/>
</dbReference>
<dbReference type="Reactome" id="R-MMU-418594">
    <property type="pathway name" value="G alpha (i) signalling events"/>
</dbReference>
<dbReference type="BioGRID-ORCS" id="12802">
    <property type="hits" value="2 hits in 62 CRISPR screens"/>
</dbReference>
<dbReference type="ChiTaRS" id="Cnr2">
    <property type="organism name" value="mouse"/>
</dbReference>
<dbReference type="PRO" id="PR:P47936"/>
<dbReference type="Proteomes" id="UP000000589">
    <property type="component" value="Chromosome 4"/>
</dbReference>
<dbReference type="RNAct" id="P47936">
    <property type="molecule type" value="protein"/>
</dbReference>
<dbReference type="Bgee" id="ENSMUSG00000062585">
    <property type="expression patterns" value="Expressed in granulocyte and 75 other cell types or tissues"/>
</dbReference>
<dbReference type="GO" id="GO:0030425">
    <property type="term" value="C:dendrite"/>
    <property type="evidence" value="ECO:0007669"/>
    <property type="project" value="UniProtKB-SubCell"/>
</dbReference>
<dbReference type="GO" id="GO:0005783">
    <property type="term" value="C:endoplasmic reticulum"/>
    <property type="evidence" value="ECO:0007669"/>
    <property type="project" value="Ensembl"/>
</dbReference>
<dbReference type="GO" id="GO:0043204">
    <property type="term" value="C:perikaryon"/>
    <property type="evidence" value="ECO:0007669"/>
    <property type="project" value="UniProtKB-SubCell"/>
</dbReference>
<dbReference type="GO" id="GO:0005886">
    <property type="term" value="C:plasma membrane"/>
    <property type="evidence" value="ECO:0007669"/>
    <property type="project" value="UniProtKB-SubCell"/>
</dbReference>
<dbReference type="GO" id="GO:0045202">
    <property type="term" value="C:synapse"/>
    <property type="evidence" value="ECO:0007669"/>
    <property type="project" value="GOC"/>
</dbReference>
<dbReference type="GO" id="GO:0004949">
    <property type="term" value="F:cannabinoid receptor activity"/>
    <property type="evidence" value="ECO:0007669"/>
    <property type="project" value="InterPro"/>
</dbReference>
<dbReference type="GO" id="GO:0006954">
    <property type="term" value="P:inflammatory response"/>
    <property type="evidence" value="ECO:0007669"/>
    <property type="project" value="UniProtKB-KW"/>
</dbReference>
<dbReference type="GO" id="GO:0030595">
    <property type="term" value="P:leukocyte chemotaxis"/>
    <property type="evidence" value="ECO:0000314"/>
    <property type="project" value="MGI"/>
</dbReference>
<dbReference type="GO" id="GO:0099553">
    <property type="term" value="P:trans-synaptic signaling by endocannabinoid, modulating synaptic transmission"/>
    <property type="evidence" value="ECO:0000314"/>
    <property type="project" value="SynGO"/>
</dbReference>
<dbReference type="CDD" id="cd15341">
    <property type="entry name" value="7tmA_CB2"/>
    <property type="match status" value="1"/>
</dbReference>
<dbReference type="FunFam" id="1.20.1070.10:FF:000072">
    <property type="entry name" value="Cannabinoid receptor 1"/>
    <property type="match status" value="1"/>
</dbReference>
<dbReference type="Gene3D" id="1.20.1070.10">
    <property type="entry name" value="Rhodopsin 7-helix transmembrane proteins"/>
    <property type="match status" value="1"/>
</dbReference>
<dbReference type="InterPro" id="IPR001551">
    <property type="entry name" value="Canbinoid_rcpt_2"/>
</dbReference>
<dbReference type="InterPro" id="IPR002230">
    <property type="entry name" value="Cnbnoid_rcpt"/>
</dbReference>
<dbReference type="InterPro" id="IPR000276">
    <property type="entry name" value="GPCR_Rhodpsn"/>
</dbReference>
<dbReference type="InterPro" id="IPR017452">
    <property type="entry name" value="GPCR_Rhodpsn_7TM"/>
</dbReference>
<dbReference type="PANTHER" id="PTHR22750">
    <property type="entry name" value="G-PROTEIN COUPLED RECEPTOR"/>
    <property type="match status" value="1"/>
</dbReference>
<dbReference type="Pfam" id="PF00001">
    <property type="entry name" value="7tm_1"/>
    <property type="match status" value="1"/>
</dbReference>
<dbReference type="PRINTS" id="PR00523">
    <property type="entry name" value="CANABINOID2R"/>
</dbReference>
<dbReference type="PRINTS" id="PR00362">
    <property type="entry name" value="CANNABINOIDR"/>
</dbReference>
<dbReference type="PRINTS" id="PR00237">
    <property type="entry name" value="GPCRRHODOPSN"/>
</dbReference>
<dbReference type="SUPFAM" id="SSF81321">
    <property type="entry name" value="Family A G protein-coupled receptor-like"/>
    <property type="match status" value="1"/>
</dbReference>
<dbReference type="PROSITE" id="PS00237">
    <property type="entry name" value="G_PROTEIN_RECEP_F1_1"/>
    <property type="match status" value="1"/>
</dbReference>
<dbReference type="PROSITE" id="PS50262">
    <property type="entry name" value="G_PROTEIN_RECEP_F1_2"/>
    <property type="match status" value="1"/>
</dbReference>